<evidence type="ECO:0000250" key="1">
    <source>
        <dbReference type="UniProtKB" id="Q8N183"/>
    </source>
</evidence>
<evidence type="ECO:0000255" key="2"/>
<evidence type="ECO:0000256" key="3">
    <source>
        <dbReference type="SAM" id="MobiDB-lite"/>
    </source>
</evidence>
<evidence type="ECO:0000305" key="4"/>
<gene>
    <name type="primary">Ndufaf2</name>
    <name type="synonym">Ndufa12l</name>
</gene>
<sequence>MSWWSGVWRSVWSALSREVREHVGTDHLGNKYYYVAEYKNWRGQTIREKRIVEAANRKEVDYEAGDIPTEWEAWIRRTRKTPPTMEEILKNEKYREEIKIKSQDFYEKDKLGKETSEELLPSPTATQVKGHASAPYFGREEPSVAPTSTGKTFQPGSWTPEDGKRQSQ</sequence>
<name>NDUF2_MOUSE</name>
<feature type="transit peptide" description="Mitochondrion" evidence="2">
    <location>
        <begin position="1"/>
        <end status="unknown"/>
    </location>
</feature>
<feature type="chain" id="PRO_0000020055" description="NADH dehydrogenase [ubiquinone] 1 alpha subcomplex assembly factor 2">
    <location>
        <begin status="unknown"/>
        <end position="168"/>
    </location>
</feature>
<feature type="region of interest" description="Disordered" evidence="3">
    <location>
        <begin position="112"/>
        <end position="168"/>
    </location>
</feature>
<feature type="compositionally biased region" description="Polar residues" evidence="3">
    <location>
        <begin position="145"/>
        <end position="157"/>
    </location>
</feature>
<feature type="modified residue" description="Phosphoserine" evidence="1">
    <location>
        <position position="133"/>
    </location>
</feature>
<keyword id="KW-0002">3D-structure</keyword>
<keyword id="KW-0143">Chaperone</keyword>
<keyword id="KW-0970">Cilium biogenesis/degradation</keyword>
<keyword id="KW-0496">Mitochondrion</keyword>
<keyword id="KW-0597">Phosphoprotein</keyword>
<keyword id="KW-1185">Reference proteome</keyword>
<keyword id="KW-0809">Transit peptide</keyword>
<comment type="function">
    <text evidence="1">Acts as a molecular chaperone for mitochondrial complex I assembly. Complex I functions in the transfer of electrons from NADH to the respiratory chain. The immediate electron acceptor for the enzyme is believed to be ubiquinone. Is involved in the initial steps of cilia formation, including removal of CP110 from the mother centrioles, docking of membrane vesicles to the mother centrioles, and establishment of the transition zone.</text>
</comment>
<comment type="subunit">
    <text evidence="1">Interacts with ARMC9.</text>
</comment>
<comment type="subcellular location">
    <subcellularLocation>
        <location evidence="1">Mitochondrion</location>
    </subcellularLocation>
</comment>
<comment type="similarity">
    <text evidence="4">Belongs to the complex I NDUFA12 subunit family.</text>
</comment>
<comment type="sequence caution" evidence="4">
    <conflict type="frameshift">
        <sequence resource="EMBL-CDS" id="AAP33449"/>
    </conflict>
</comment>
<reference key="1">
    <citation type="journal article" date="2005" name="J. Biol. Chem.">
        <title>A novel Myc-target gene, mimitin, that is involved in cell proliferation of esophageal squamous cell carcinoma.</title>
        <authorList>
            <person name="Tsuneoka M."/>
            <person name="Teye K."/>
            <person name="Arima N."/>
            <person name="Soejima M."/>
            <person name="Otera H."/>
            <person name="Ohashi K."/>
            <person name="Koga Y."/>
            <person name="Fujita H."/>
            <person name="Shirouzu K."/>
            <person name="Kimura H."/>
            <person name="Koda Y."/>
        </authorList>
    </citation>
    <scope>NUCLEOTIDE SEQUENCE [MRNA]</scope>
</reference>
<reference key="2">
    <citation type="submission" date="2003-03" db="EMBL/GenBank/DDBJ databases">
        <title>A candidate gene related to development of cleft palate.</title>
        <authorList>
            <person name="Li X."/>
            <person name="Jin Y."/>
            <person name="Yue W."/>
            <person name="Yan W."/>
            <person name="Liu Y."/>
        </authorList>
    </citation>
    <scope>NUCLEOTIDE SEQUENCE [MRNA]</scope>
    <source>
        <strain>C57BL/6J</strain>
    </source>
</reference>
<reference key="3">
    <citation type="journal article" date="2004" name="Genome Res.">
        <title>The status, quality, and expansion of the NIH full-length cDNA project: the Mammalian Gene Collection (MGC).</title>
        <authorList>
            <consortium name="The MGC Project Team"/>
        </authorList>
    </citation>
    <scope>NUCLEOTIDE SEQUENCE [LARGE SCALE MRNA]</scope>
    <source>
        <tissue>Brain</tissue>
    </source>
</reference>
<reference key="4">
    <citation type="journal article" date="2010" name="Cell">
        <title>A tissue-specific atlas of mouse protein phosphorylation and expression.</title>
        <authorList>
            <person name="Huttlin E.L."/>
            <person name="Jedrychowski M.P."/>
            <person name="Elias J.E."/>
            <person name="Goswami T."/>
            <person name="Rad R."/>
            <person name="Beausoleil S.A."/>
            <person name="Villen J."/>
            <person name="Haas W."/>
            <person name="Sowa M.E."/>
            <person name="Gygi S.P."/>
        </authorList>
    </citation>
    <scope>IDENTIFICATION BY MASS SPECTROMETRY [LARGE SCALE ANALYSIS]</scope>
    <source>
        <tissue>Brain</tissue>
        <tissue>Brown adipose tissue</tissue>
        <tissue>Heart</tissue>
        <tissue>Kidney</tissue>
        <tissue>Liver</tissue>
        <tissue>Lung</tissue>
        <tissue>Pancreas</tissue>
        <tissue>Spleen</tissue>
        <tissue>Testis</tissue>
    </source>
</reference>
<proteinExistence type="evidence at protein level"/>
<organism>
    <name type="scientific">Mus musculus</name>
    <name type="common">Mouse</name>
    <dbReference type="NCBI Taxonomy" id="10090"/>
    <lineage>
        <taxon>Eukaryota</taxon>
        <taxon>Metazoa</taxon>
        <taxon>Chordata</taxon>
        <taxon>Craniata</taxon>
        <taxon>Vertebrata</taxon>
        <taxon>Euteleostomi</taxon>
        <taxon>Mammalia</taxon>
        <taxon>Eutheria</taxon>
        <taxon>Euarchontoglires</taxon>
        <taxon>Glires</taxon>
        <taxon>Rodentia</taxon>
        <taxon>Myomorpha</taxon>
        <taxon>Muroidea</taxon>
        <taxon>Muridae</taxon>
        <taxon>Murinae</taxon>
        <taxon>Mus</taxon>
        <taxon>Mus</taxon>
    </lineage>
</organism>
<protein>
    <recommendedName>
        <fullName>NADH dehydrogenase [ubiquinone] 1 alpha subcomplex assembly factor 2</fullName>
    </recommendedName>
    <alternativeName>
        <fullName evidence="1">Mimitin</fullName>
    </alternativeName>
    <alternativeName>
        <fullName evidence="1">Myc-induced mitochondrial protein</fullName>
        <shortName evidence="1">MMTN</shortName>
    </alternativeName>
    <alternativeName>
        <fullName>NDUFA12-like protein</fullName>
    </alternativeName>
</protein>
<dbReference type="EMBL" id="AB183434">
    <property type="protein sequence ID" value="BAD91206.1"/>
    <property type="molecule type" value="mRNA"/>
</dbReference>
<dbReference type="EMBL" id="AY262012">
    <property type="protein sequence ID" value="AAP33449.1"/>
    <property type="status" value="ALT_FRAME"/>
    <property type="molecule type" value="mRNA"/>
</dbReference>
<dbReference type="EMBL" id="BC116975">
    <property type="protein sequence ID" value="AAI16976.1"/>
    <property type="molecule type" value="mRNA"/>
</dbReference>
<dbReference type="EMBL" id="BC116977">
    <property type="protein sequence ID" value="AAI16978.1"/>
    <property type="molecule type" value="mRNA"/>
</dbReference>
<dbReference type="CCDS" id="CCDS49357.1"/>
<dbReference type="RefSeq" id="NP_001120818.1">
    <property type="nucleotide sequence ID" value="NM_001127346.2"/>
</dbReference>
<dbReference type="RefSeq" id="XP_036014098.1">
    <property type="nucleotide sequence ID" value="XM_036158205.1"/>
</dbReference>
<dbReference type="PDB" id="8CA5">
    <property type="method" value="EM"/>
    <property type="resolution" value="3.90 A"/>
    <property type="chains" value="t=1-168"/>
</dbReference>
<dbReference type="PDBsum" id="8CA5"/>
<dbReference type="EMDB" id="EMD-16518"/>
<dbReference type="SMR" id="Q59J78"/>
<dbReference type="BioGRID" id="217603">
    <property type="interactions" value="2"/>
</dbReference>
<dbReference type="FunCoup" id="Q59J78">
    <property type="interactions" value="1580"/>
</dbReference>
<dbReference type="STRING" id="10090.ENSMUSP00000130532"/>
<dbReference type="GlyGen" id="Q59J78">
    <property type="glycosylation" value="2 sites, 1 O-linked glycan (1 site)"/>
</dbReference>
<dbReference type="iPTMnet" id="Q59J78"/>
<dbReference type="PhosphoSitePlus" id="Q59J78"/>
<dbReference type="jPOST" id="Q59J78"/>
<dbReference type="PaxDb" id="10090-ENSMUSP00000130532"/>
<dbReference type="PeptideAtlas" id="Q59J78"/>
<dbReference type="ProteomicsDB" id="293644"/>
<dbReference type="Pumba" id="Q59J78"/>
<dbReference type="Ensembl" id="ENSMUST00000163558.3">
    <property type="protein sequence ID" value="ENSMUSP00000130532.2"/>
    <property type="gene ID" value="ENSMUSG00000068184.8"/>
</dbReference>
<dbReference type="GeneID" id="75597"/>
<dbReference type="KEGG" id="mmu:75597"/>
<dbReference type="UCSC" id="uc007ruu.2">
    <property type="organism name" value="mouse"/>
</dbReference>
<dbReference type="AGR" id="MGI:1922847"/>
<dbReference type="CTD" id="91942"/>
<dbReference type="MGI" id="MGI:1922847">
    <property type="gene designation" value="Ndufaf2"/>
</dbReference>
<dbReference type="VEuPathDB" id="HostDB:ENSMUSG00000068184"/>
<dbReference type="eggNOG" id="ENOG502S21I">
    <property type="taxonomic scope" value="Eukaryota"/>
</dbReference>
<dbReference type="GeneTree" id="ENSGT00390000002743"/>
<dbReference type="HOGENOM" id="CLU_138027_0_0_1"/>
<dbReference type="InParanoid" id="Q59J78"/>
<dbReference type="OMA" id="HKTWAGQ"/>
<dbReference type="OrthoDB" id="10255576at2759"/>
<dbReference type="PhylomeDB" id="Q59J78"/>
<dbReference type="TreeFam" id="TF314761"/>
<dbReference type="Reactome" id="R-MMU-6799198">
    <property type="pathway name" value="Complex I biogenesis"/>
</dbReference>
<dbReference type="BioGRID-ORCS" id="75597">
    <property type="hits" value="6 hits in 77 CRISPR screens"/>
</dbReference>
<dbReference type="ChiTaRS" id="Ndufaf2">
    <property type="organism name" value="mouse"/>
</dbReference>
<dbReference type="PRO" id="PR:Q59J78"/>
<dbReference type="Proteomes" id="UP000000589">
    <property type="component" value="Chromosome 13"/>
</dbReference>
<dbReference type="RNAct" id="Q59J78">
    <property type="molecule type" value="protein"/>
</dbReference>
<dbReference type="Bgee" id="ENSMUSG00000068184">
    <property type="expression patterns" value="Expressed in manus and 224 other cell types or tissues"/>
</dbReference>
<dbReference type="ExpressionAtlas" id="Q59J78">
    <property type="expression patterns" value="baseline and differential"/>
</dbReference>
<dbReference type="GO" id="GO:0005739">
    <property type="term" value="C:mitochondrion"/>
    <property type="evidence" value="ECO:0000266"/>
    <property type="project" value="MGI"/>
</dbReference>
<dbReference type="GO" id="GO:0045271">
    <property type="term" value="C:respiratory chain complex I"/>
    <property type="evidence" value="ECO:0007669"/>
    <property type="project" value="InterPro"/>
</dbReference>
<dbReference type="GO" id="GO:0044877">
    <property type="term" value="F:protein-containing complex binding"/>
    <property type="evidence" value="ECO:0007669"/>
    <property type="project" value="Ensembl"/>
</dbReference>
<dbReference type="GO" id="GO:0060271">
    <property type="term" value="P:cilium assembly"/>
    <property type="evidence" value="ECO:0000250"/>
    <property type="project" value="UniProtKB"/>
</dbReference>
<dbReference type="GO" id="GO:0032981">
    <property type="term" value="P:mitochondrial respiratory chain complex I assembly"/>
    <property type="evidence" value="ECO:0000315"/>
    <property type="project" value="MGI"/>
</dbReference>
<dbReference type="GO" id="GO:0061179">
    <property type="term" value="P:negative regulation of insulin secretion involved in cellular response to glucose stimulus"/>
    <property type="evidence" value="ECO:0000315"/>
    <property type="project" value="MGI"/>
</dbReference>
<dbReference type="InterPro" id="IPR052618">
    <property type="entry name" value="ComplexI_NDUFA12"/>
</dbReference>
<dbReference type="InterPro" id="IPR007763">
    <property type="entry name" value="NDUFA12"/>
</dbReference>
<dbReference type="PANTHER" id="PTHR32470">
    <property type="entry name" value="ADH DEHYDROGENASE [UBIQUINONE] 1 ALPHA SUBCOMPLEX ASSEMBLY FACTOR 2"/>
    <property type="match status" value="1"/>
</dbReference>
<dbReference type="PANTHER" id="PTHR32470:SF2">
    <property type="entry name" value="NADH DEHYDROGENASE [UBIQUINONE] 1 ALPHA SUBCOMPLEX ASSEMBLY FACTOR 2"/>
    <property type="match status" value="1"/>
</dbReference>
<dbReference type="Pfam" id="PF05071">
    <property type="entry name" value="NDUFA12"/>
    <property type="match status" value="1"/>
</dbReference>
<accession>Q59J78</accession>
<accession>Q14A56</accession>
<accession>Q80VX9</accession>